<proteinExistence type="evidence at protein level"/>
<sequence length="339" mass="37995">MMTTEDFKKSTANLKKVVPLMMKHHVAATPVNYALWYTYVDQAIPQLNAEMDSVLKNFGLCPPASGEHLYQQYIATKAETNINQLRANVEVLLGEISSSMSDTLSDTSSFANVIDKSFKDLERVEQDNLSIEEVMTVIRRLVSDSKDIRHSTNFLNNQLNAATLEISRLKEQLAKVQKDALFDSLSGLYNRRAFDGDMFTLIHAGQQVSLIMLDIDHFKALNDNYGHLFGDQIIRAIAKRLQSLCRDGVTAYRYGGEEFALIAPHKSLRIARQFAESVRRSIEKLTVKDRRSGQSVGSITASFGVVEKIEGDSLESLIGRADGLLYEAKNLGRNRVMPL</sequence>
<accession>Q9KKZ4</accession>
<name>VDCA_VIBCH</name>
<protein>
    <recommendedName>
        <fullName>Diguanylate cyclase VdcA</fullName>
        <shortName>DGC</shortName>
        <ecNumber>2.7.7.65</ecNumber>
    </recommendedName>
</protein>
<evidence type="ECO:0000250" key="1"/>
<evidence type="ECO:0000255" key="2"/>
<evidence type="ECO:0000255" key="3">
    <source>
        <dbReference type="PROSITE-ProRule" id="PRU00095"/>
    </source>
</evidence>
<evidence type="ECO:0000269" key="4">
    <source>
    </source>
</evidence>
<reference key="1">
    <citation type="journal article" date="2000" name="Nature">
        <title>DNA sequence of both chromosomes of the cholera pathogen Vibrio cholerae.</title>
        <authorList>
            <person name="Heidelberg J.F."/>
            <person name="Eisen J.A."/>
            <person name="Nelson W.C."/>
            <person name="Clayton R.A."/>
            <person name="Gwinn M.L."/>
            <person name="Dodson R.J."/>
            <person name="Haft D.H."/>
            <person name="Hickey E.K."/>
            <person name="Peterson J.D."/>
            <person name="Umayam L.A."/>
            <person name="Gill S.R."/>
            <person name="Nelson K.E."/>
            <person name="Read T.D."/>
            <person name="Tettelin H."/>
            <person name="Richardson D.L."/>
            <person name="Ermolaeva M.D."/>
            <person name="Vamathevan J.J."/>
            <person name="Bass S."/>
            <person name="Qin H."/>
            <person name="Dragoi I."/>
            <person name="Sellers P."/>
            <person name="McDonald L.A."/>
            <person name="Utterback T.R."/>
            <person name="Fleischmann R.D."/>
            <person name="Nierman W.C."/>
            <person name="White O."/>
            <person name="Salzberg S.L."/>
            <person name="Smith H.O."/>
            <person name="Colwell R.R."/>
            <person name="Mekalanos J.J."/>
            <person name="Venter J.C."/>
            <person name="Fraser C.M."/>
        </authorList>
    </citation>
    <scope>NUCLEOTIDE SEQUENCE [LARGE SCALE GENOMIC DNA]</scope>
    <source>
        <strain>ATCC 39315 / El Tor Inaba N16961</strain>
    </source>
</reference>
<reference key="2">
    <citation type="journal article" date="2008" name="Infect. Immun.">
        <title>Role of cyclic di-GMP during el tor biotype Vibrio cholerae infection: characterization of the in vivo-induced cyclic di-GMP phosphodiesterase CdpA.</title>
        <authorList>
            <person name="Tamayo R."/>
            <person name="Schild S."/>
            <person name="Pratt J.T."/>
            <person name="Camilli A."/>
        </authorList>
    </citation>
    <scope>FUNCTION</scope>
    <scope>CATALYTIC ACTIVITY</scope>
    <scope>GENE NAME</scope>
    <scope>MUTAGENESIS OF GLU-258</scope>
    <source>
        <strain>El Tor C6709 / Serotype O1</strain>
    </source>
</reference>
<keyword id="KW-0342">GTP-binding</keyword>
<keyword id="KW-0460">Magnesium</keyword>
<keyword id="KW-0479">Metal-binding</keyword>
<keyword id="KW-0547">Nucleotide-binding</keyword>
<keyword id="KW-1185">Reference proteome</keyword>
<keyword id="KW-0808">Transferase</keyword>
<gene>
    <name type="primary">vdcA</name>
    <name type="ordered locus">VC_A0956</name>
</gene>
<feature type="chain" id="PRO_0000425961" description="Diguanylate cyclase VdcA">
    <location>
        <begin position="1"/>
        <end position="339"/>
    </location>
</feature>
<feature type="domain" description="GGDEF" evidence="3">
    <location>
        <begin position="206"/>
        <end position="339"/>
    </location>
</feature>
<feature type="active site" description="Proton acceptor" evidence="2">
    <location>
        <position position="257"/>
    </location>
</feature>
<feature type="binding site" evidence="1">
    <location>
        <position position="214"/>
    </location>
    <ligand>
        <name>Mg(2+)</name>
        <dbReference type="ChEBI" id="CHEBI:18420"/>
    </ligand>
</feature>
<feature type="binding site" evidence="1">
    <location>
        <position position="222"/>
    </location>
    <ligand>
        <name>substrate</name>
    </ligand>
</feature>
<feature type="binding site" evidence="1">
    <location>
        <position position="231"/>
    </location>
    <ligand>
        <name>substrate</name>
    </ligand>
</feature>
<feature type="binding site" evidence="1">
    <location>
        <position position="257"/>
    </location>
    <ligand>
        <name>Mg(2+)</name>
        <dbReference type="ChEBI" id="CHEBI:18420"/>
    </ligand>
</feature>
<feature type="site" description="Transition state stabilizer" evidence="2">
    <location>
        <position position="219"/>
    </location>
</feature>
<feature type="mutagenesis site" description="Loss of DGC activity." evidence="4">
    <original>E</original>
    <variation>A</variation>
    <location>
        <position position="258"/>
    </location>
</feature>
<comment type="function">
    <text evidence="4">Diguanylate cyclase (DGC) that catalyzes the synthesis of cyclic diguanylate (c-di-GMP) via the condensation of 2 GTP molecules. Is involved in the modulation of intracellular c-di-GMP levels. Cyclic-di-GMP is a second messenger which positively regulates biofilm formation and negatively regulates virulence in V.cholerae, and is proposed to play an important role in the transition from persistence in the environment to survival in the host. Overexpression of vdcA results in increased biofilm formation, and reduced motility and virulence.</text>
</comment>
<comment type="catalytic activity">
    <reaction evidence="4">
        <text>2 GTP = 3',3'-c-di-GMP + 2 diphosphate</text>
        <dbReference type="Rhea" id="RHEA:24898"/>
        <dbReference type="ChEBI" id="CHEBI:33019"/>
        <dbReference type="ChEBI" id="CHEBI:37565"/>
        <dbReference type="ChEBI" id="CHEBI:58805"/>
        <dbReference type="EC" id="2.7.7.65"/>
    </reaction>
</comment>
<comment type="cofactor">
    <cofactor evidence="1">
        <name>Mg(2+)</name>
        <dbReference type="ChEBI" id="CHEBI:18420"/>
    </cofactor>
    <text evidence="1">Binds 1 Mg(2+) ion per subunit.</text>
</comment>
<comment type="pathway">
    <text>Purine metabolism; 3',5'-cyclic di-GMP biosynthesis.</text>
</comment>
<organism>
    <name type="scientific">Vibrio cholerae serotype O1 (strain ATCC 39315 / El Tor Inaba N16961)</name>
    <dbReference type="NCBI Taxonomy" id="243277"/>
    <lineage>
        <taxon>Bacteria</taxon>
        <taxon>Pseudomonadati</taxon>
        <taxon>Pseudomonadota</taxon>
        <taxon>Gammaproteobacteria</taxon>
        <taxon>Vibrionales</taxon>
        <taxon>Vibrionaceae</taxon>
        <taxon>Vibrio</taxon>
    </lineage>
</organism>
<dbReference type="EC" id="2.7.7.65"/>
<dbReference type="EMBL" id="AE003853">
    <property type="protein sequence ID" value="AAF96852.1"/>
    <property type="molecule type" value="Genomic_DNA"/>
</dbReference>
<dbReference type="PIR" id="D82396">
    <property type="entry name" value="D82396"/>
</dbReference>
<dbReference type="RefSeq" id="NP_233340.1">
    <property type="nucleotide sequence ID" value="NC_002506.1"/>
</dbReference>
<dbReference type="SMR" id="Q9KKZ4"/>
<dbReference type="STRING" id="243277.VC_A0956"/>
<dbReference type="DNASU" id="2612301"/>
<dbReference type="EnsemblBacteria" id="AAF96852">
    <property type="protein sequence ID" value="AAF96852"/>
    <property type="gene ID" value="VC_A0956"/>
</dbReference>
<dbReference type="KEGG" id="vch:VC_A0956"/>
<dbReference type="PATRIC" id="fig|243277.26.peg.3567"/>
<dbReference type="eggNOG" id="COG3706">
    <property type="taxonomic scope" value="Bacteria"/>
</dbReference>
<dbReference type="HOGENOM" id="CLU_000445_11_5_6"/>
<dbReference type="BRENDA" id="2.7.7.65">
    <property type="organism ID" value="15862"/>
</dbReference>
<dbReference type="UniPathway" id="UPA00599"/>
<dbReference type="Proteomes" id="UP000000584">
    <property type="component" value="Chromosome 2"/>
</dbReference>
<dbReference type="GO" id="GO:0005886">
    <property type="term" value="C:plasma membrane"/>
    <property type="evidence" value="ECO:0000318"/>
    <property type="project" value="GO_Central"/>
</dbReference>
<dbReference type="GO" id="GO:0052621">
    <property type="term" value="F:diguanylate cyclase activity"/>
    <property type="evidence" value="ECO:0000318"/>
    <property type="project" value="GO_Central"/>
</dbReference>
<dbReference type="GO" id="GO:0005525">
    <property type="term" value="F:GTP binding"/>
    <property type="evidence" value="ECO:0007669"/>
    <property type="project" value="UniProtKB-KW"/>
</dbReference>
<dbReference type="GO" id="GO:0046872">
    <property type="term" value="F:metal ion binding"/>
    <property type="evidence" value="ECO:0007669"/>
    <property type="project" value="UniProtKB-KW"/>
</dbReference>
<dbReference type="GO" id="GO:0043709">
    <property type="term" value="P:cell adhesion involved in single-species biofilm formation"/>
    <property type="evidence" value="ECO:0000318"/>
    <property type="project" value="GO_Central"/>
</dbReference>
<dbReference type="GO" id="GO:1902201">
    <property type="term" value="P:negative regulation of bacterial-type flagellum-dependent cell motility"/>
    <property type="evidence" value="ECO:0000318"/>
    <property type="project" value="GO_Central"/>
</dbReference>
<dbReference type="CDD" id="cd01949">
    <property type="entry name" value="GGDEF"/>
    <property type="match status" value="1"/>
</dbReference>
<dbReference type="FunFam" id="3.30.70.270:FF:000001">
    <property type="entry name" value="Diguanylate cyclase domain protein"/>
    <property type="match status" value="1"/>
</dbReference>
<dbReference type="Gene3D" id="3.30.70.270">
    <property type="match status" value="1"/>
</dbReference>
<dbReference type="InterPro" id="IPR050469">
    <property type="entry name" value="Diguanylate_Cyclase"/>
</dbReference>
<dbReference type="InterPro" id="IPR000160">
    <property type="entry name" value="GGDEF_dom"/>
</dbReference>
<dbReference type="InterPro" id="IPR029787">
    <property type="entry name" value="Nucleotide_cyclase"/>
</dbReference>
<dbReference type="InterPro" id="IPR043128">
    <property type="entry name" value="Rev_trsase/Diguanyl_cyclase"/>
</dbReference>
<dbReference type="NCBIfam" id="TIGR00254">
    <property type="entry name" value="GGDEF"/>
    <property type="match status" value="1"/>
</dbReference>
<dbReference type="PANTHER" id="PTHR45138:SF2">
    <property type="entry name" value="DIGUANYLATE CYCLASE VDCA"/>
    <property type="match status" value="1"/>
</dbReference>
<dbReference type="PANTHER" id="PTHR45138">
    <property type="entry name" value="REGULATORY COMPONENTS OF SENSORY TRANSDUCTION SYSTEM"/>
    <property type="match status" value="1"/>
</dbReference>
<dbReference type="Pfam" id="PF00990">
    <property type="entry name" value="GGDEF"/>
    <property type="match status" value="1"/>
</dbReference>
<dbReference type="SMART" id="SM00267">
    <property type="entry name" value="GGDEF"/>
    <property type="match status" value="1"/>
</dbReference>
<dbReference type="SUPFAM" id="SSF55073">
    <property type="entry name" value="Nucleotide cyclase"/>
    <property type="match status" value="1"/>
</dbReference>
<dbReference type="PROSITE" id="PS50887">
    <property type="entry name" value="GGDEF"/>
    <property type="match status" value="1"/>
</dbReference>